<comment type="function">
    <text evidence="1">Catalyzes the reversible isomerization of glucose-6-phosphate to fructose-6-phosphate.</text>
</comment>
<comment type="catalytic activity">
    <reaction evidence="1">
        <text>alpha-D-glucose 6-phosphate = beta-D-fructose 6-phosphate</text>
        <dbReference type="Rhea" id="RHEA:11816"/>
        <dbReference type="ChEBI" id="CHEBI:57634"/>
        <dbReference type="ChEBI" id="CHEBI:58225"/>
        <dbReference type="EC" id="5.3.1.9"/>
    </reaction>
</comment>
<comment type="pathway">
    <text evidence="1">Carbohydrate biosynthesis; gluconeogenesis.</text>
</comment>
<comment type="pathway">
    <text evidence="1">Carbohydrate degradation; glycolysis; D-glyceraldehyde 3-phosphate and glycerone phosphate from D-glucose: step 2/4.</text>
</comment>
<comment type="subcellular location">
    <subcellularLocation>
        <location evidence="1">Cytoplasm</location>
    </subcellularLocation>
</comment>
<comment type="similarity">
    <text evidence="1">Belongs to the GPI family.</text>
</comment>
<organism>
    <name type="scientific">Prochlorococcus marinus (strain MIT 9215)</name>
    <dbReference type="NCBI Taxonomy" id="93060"/>
    <lineage>
        <taxon>Bacteria</taxon>
        <taxon>Bacillati</taxon>
        <taxon>Cyanobacteriota</taxon>
        <taxon>Cyanophyceae</taxon>
        <taxon>Synechococcales</taxon>
        <taxon>Prochlorococcaceae</taxon>
        <taxon>Prochlorococcus</taxon>
    </lineage>
</organism>
<keyword id="KW-0963">Cytoplasm</keyword>
<keyword id="KW-0312">Gluconeogenesis</keyword>
<keyword id="KW-0324">Glycolysis</keyword>
<keyword id="KW-0413">Isomerase</keyword>
<sequence length="527" mass="59412">MNGDLNSWDKFCNYLWFDNKLNIWLDISKISFTRKEIDNLEEKFIDVFSSINELENGAISNIDENRQVGHYWLRNPSISPSSKIEEEICADINEISEFGKQILNGDIKNKNNQKYTDVLWIGIGGSGLGPILITDSLQKSSRGLNFSYIDNVDPFLISERLEELSEKLSTTLFVVVSKSGGTPEPRIAMEIIKSHCENNSLEWNSNAIAITMKDSKLFKKATSENWLKIFNLQDWVGGRTSITSSVGLLPLALINENIFEFIRGASLMDEATRTVDFKNNPAALLSSAWYLTGDGIGKRDMVVLPYRDRLQVFSKYLQQLVMESLGKKFNRKGEVVNQGISVFGNKGSTDQHAYVQQLRDGIDNFFCIFIELLDSPSTSIFDKKENPKEYLSGFLQGTRSALSSENRQSITITLEKLNCFSLGALIALFERAVSFYAELVNINAYDQPGVEAGKKAAANIIEYQQKVRNLLDEGGEYSINDITSLFDNSVSEPIFFILREMCFGNDNYLVKGDWSNPNSLVIQKINS</sequence>
<proteinExistence type="inferred from homology"/>
<reference key="1">
    <citation type="journal article" date="2007" name="PLoS Genet.">
        <title>Patterns and implications of gene gain and loss in the evolution of Prochlorococcus.</title>
        <authorList>
            <person name="Kettler G.C."/>
            <person name="Martiny A.C."/>
            <person name="Huang K."/>
            <person name="Zucker J."/>
            <person name="Coleman M.L."/>
            <person name="Rodrigue S."/>
            <person name="Chen F."/>
            <person name="Lapidus A."/>
            <person name="Ferriera S."/>
            <person name="Johnson J."/>
            <person name="Steglich C."/>
            <person name="Church G.M."/>
            <person name="Richardson P."/>
            <person name="Chisholm S.W."/>
        </authorList>
    </citation>
    <scope>NUCLEOTIDE SEQUENCE [LARGE SCALE GENOMIC DNA]</scope>
    <source>
        <strain>MIT 9215</strain>
    </source>
</reference>
<name>G6PI_PROM2</name>
<gene>
    <name evidence="1" type="primary">pgi</name>
    <name type="ordered locus">P9215_10021</name>
</gene>
<accession>A8G4T6</accession>
<evidence type="ECO:0000255" key="1">
    <source>
        <dbReference type="HAMAP-Rule" id="MF_00473"/>
    </source>
</evidence>
<dbReference type="EC" id="5.3.1.9" evidence="1"/>
<dbReference type="EMBL" id="CP000825">
    <property type="protein sequence ID" value="ABV50617.1"/>
    <property type="molecule type" value="Genomic_DNA"/>
</dbReference>
<dbReference type="RefSeq" id="WP_012007704.1">
    <property type="nucleotide sequence ID" value="NC_009840.1"/>
</dbReference>
<dbReference type="SMR" id="A8G4T6"/>
<dbReference type="STRING" id="93060.P9215_10021"/>
<dbReference type="KEGG" id="pmh:P9215_10021"/>
<dbReference type="eggNOG" id="COG0166">
    <property type="taxonomic scope" value="Bacteria"/>
</dbReference>
<dbReference type="HOGENOM" id="CLU_033288_0_0_3"/>
<dbReference type="OrthoDB" id="140919at2"/>
<dbReference type="UniPathway" id="UPA00109">
    <property type="reaction ID" value="UER00181"/>
</dbReference>
<dbReference type="UniPathway" id="UPA00138"/>
<dbReference type="Proteomes" id="UP000002014">
    <property type="component" value="Chromosome"/>
</dbReference>
<dbReference type="GO" id="GO:0005829">
    <property type="term" value="C:cytosol"/>
    <property type="evidence" value="ECO:0007669"/>
    <property type="project" value="TreeGrafter"/>
</dbReference>
<dbReference type="GO" id="GO:0097367">
    <property type="term" value="F:carbohydrate derivative binding"/>
    <property type="evidence" value="ECO:0007669"/>
    <property type="project" value="InterPro"/>
</dbReference>
<dbReference type="GO" id="GO:0004347">
    <property type="term" value="F:glucose-6-phosphate isomerase activity"/>
    <property type="evidence" value="ECO:0007669"/>
    <property type="project" value="UniProtKB-UniRule"/>
</dbReference>
<dbReference type="GO" id="GO:0048029">
    <property type="term" value="F:monosaccharide binding"/>
    <property type="evidence" value="ECO:0007669"/>
    <property type="project" value="TreeGrafter"/>
</dbReference>
<dbReference type="GO" id="GO:0006094">
    <property type="term" value="P:gluconeogenesis"/>
    <property type="evidence" value="ECO:0007669"/>
    <property type="project" value="UniProtKB-UniRule"/>
</dbReference>
<dbReference type="GO" id="GO:0051156">
    <property type="term" value="P:glucose 6-phosphate metabolic process"/>
    <property type="evidence" value="ECO:0007669"/>
    <property type="project" value="TreeGrafter"/>
</dbReference>
<dbReference type="GO" id="GO:0006096">
    <property type="term" value="P:glycolytic process"/>
    <property type="evidence" value="ECO:0007669"/>
    <property type="project" value="UniProtKB-UniRule"/>
</dbReference>
<dbReference type="CDD" id="cd05015">
    <property type="entry name" value="SIS_PGI_1"/>
    <property type="match status" value="1"/>
</dbReference>
<dbReference type="CDD" id="cd05016">
    <property type="entry name" value="SIS_PGI_2"/>
    <property type="match status" value="1"/>
</dbReference>
<dbReference type="FunFam" id="3.40.50.10490:FF:000021">
    <property type="entry name" value="Glucose-6-phosphate isomerase"/>
    <property type="match status" value="1"/>
</dbReference>
<dbReference type="Gene3D" id="3.40.50.10490">
    <property type="entry name" value="Glucose-6-phosphate isomerase like protein, domain 1"/>
    <property type="match status" value="3"/>
</dbReference>
<dbReference type="HAMAP" id="MF_00473">
    <property type="entry name" value="G6P_isomerase"/>
    <property type="match status" value="1"/>
</dbReference>
<dbReference type="InterPro" id="IPR001672">
    <property type="entry name" value="G6P_Isomerase"/>
</dbReference>
<dbReference type="InterPro" id="IPR018189">
    <property type="entry name" value="Phosphoglucose_isomerase_CS"/>
</dbReference>
<dbReference type="InterPro" id="IPR046348">
    <property type="entry name" value="SIS_dom_sf"/>
</dbReference>
<dbReference type="InterPro" id="IPR035476">
    <property type="entry name" value="SIS_PGI_1"/>
</dbReference>
<dbReference type="InterPro" id="IPR035482">
    <property type="entry name" value="SIS_PGI_2"/>
</dbReference>
<dbReference type="NCBIfam" id="NF010696">
    <property type="entry name" value="PRK14096.1"/>
    <property type="match status" value="1"/>
</dbReference>
<dbReference type="PANTHER" id="PTHR11469">
    <property type="entry name" value="GLUCOSE-6-PHOSPHATE ISOMERASE"/>
    <property type="match status" value="1"/>
</dbReference>
<dbReference type="PANTHER" id="PTHR11469:SF1">
    <property type="entry name" value="GLUCOSE-6-PHOSPHATE ISOMERASE"/>
    <property type="match status" value="1"/>
</dbReference>
<dbReference type="Pfam" id="PF00342">
    <property type="entry name" value="PGI"/>
    <property type="match status" value="2"/>
</dbReference>
<dbReference type="PRINTS" id="PR00662">
    <property type="entry name" value="G6PISOMERASE"/>
</dbReference>
<dbReference type="SUPFAM" id="SSF53697">
    <property type="entry name" value="SIS domain"/>
    <property type="match status" value="1"/>
</dbReference>
<dbReference type="PROSITE" id="PS00174">
    <property type="entry name" value="P_GLUCOSE_ISOMERASE_2"/>
    <property type="match status" value="1"/>
</dbReference>
<dbReference type="PROSITE" id="PS51463">
    <property type="entry name" value="P_GLUCOSE_ISOMERASE_3"/>
    <property type="match status" value="1"/>
</dbReference>
<protein>
    <recommendedName>
        <fullName evidence="1">Glucose-6-phosphate isomerase</fullName>
        <shortName evidence="1">GPI</shortName>
        <ecNumber evidence="1">5.3.1.9</ecNumber>
    </recommendedName>
    <alternativeName>
        <fullName evidence="1">Phosphoglucose isomerase</fullName>
        <shortName evidence="1">PGI</shortName>
    </alternativeName>
    <alternativeName>
        <fullName evidence="1">Phosphohexose isomerase</fullName>
        <shortName evidence="1">PHI</shortName>
    </alternativeName>
</protein>
<feature type="chain" id="PRO_1000060398" description="Glucose-6-phosphate isomerase">
    <location>
        <begin position="1"/>
        <end position="527"/>
    </location>
</feature>
<feature type="active site" description="Proton donor" evidence="1">
    <location>
        <position position="323"/>
    </location>
</feature>
<feature type="active site" evidence="1">
    <location>
        <position position="352"/>
    </location>
</feature>
<feature type="active site" evidence="1">
    <location>
        <position position="454"/>
    </location>
</feature>